<name>B561I_ARATH</name>
<comment type="function">
    <text evidence="5">May act as a catecholamine-responsive trans-membrane electron transporter.</text>
</comment>
<comment type="cofactor">
    <cofactor evidence="1">
        <name>heme b</name>
        <dbReference type="ChEBI" id="CHEBI:60344"/>
    </cofactor>
    <text evidence="1">Binds 2 heme b groups non-covalently.</text>
</comment>
<comment type="subcellular location">
    <subcellularLocation>
        <location evidence="7">Membrane</location>
        <topology evidence="7">Multi-pass membrane protein</topology>
    </subcellularLocation>
</comment>
<comment type="domain">
    <text evidence="5 6">DOMON domain could bind catecholamines and thereby could regulate the cytochrome b561 domain function (PubMed:15022831). DOMON domain could bind one heme b (PubMed:19386804).</text>
</comment>
<reference key="1">
    <citation type="journal article" date="2000" name="Nature">
        <title>Sequence and analysis of chromosome 3 of the plant Arabidopsis thaliana.</title>
        <authorList>
            <person name="Salanoubat M."/>
            <person name="Lemcke K."/>
            <person name="Rieger M."/>
            <person name="Ansorge W."/>
            <person name="Unseld M."/>
            <person name="Fartmann B."/>
            <person name="Valle G."/>
            <person name="Bloecker H."/>
            <person name="Perez-Alonso M."/>
            <person name="Obermaier B."/>
            <person name="Delseny M."/>
            <person name="Boutry M."/>
            <person name="Grivell L.A."/>
            <person name="Mache R."/>
            <person name="Puigdomenech P."/>
            <person name="De Simone V."/>
            <person name="Choisne N."/>
            <person name="Artiguenave F."/>
            <person name="Robert C."/>
            <person name="Brottier P."/>
            <person name="Wincker P."/>
            <person name="Cattolico L."/>
            <person name="Weissenbach J."/>
            <person name="Saurin W."/>
            <person name="Quetier F."/>
            <person name="Schaefer M."/>
            <person name="Mueller-Auer S."/>
            <person name="Gabel C."/>
            <person name="Fuchs M."/>
            <person name="Benes V."/>
            <person name="Wurmbach E."/>
            <person name="Drzonek H."/>
            <person name="Erfle H."/>
            <person name="Jordan N."/>
            <person name="Bangert S."/>
            <person name="Wiedelmann R."/>
            <person name="Kranz H."/>
            <person name="Voss H."/>
            <person name="Holland R."/>
            <person name="Brandt P."/>
            <person name="Nyakatura G."/>
            <person name="Vezzi A."/>
            <person name="D'Angelo M."/>
            <person name="Pallavicini A."/>
            <person name="Toppo S."/>
            <person name="Simionati B."/>
            <person name="Conrad A."/>
            <person name="Hornischer K."/>
            <person name="Kauer G."/>
            <person name="Loehnert T.-H."/>
            <person name="Nordsiek G."/>
            <person name="Reichelt J."/>
            <person name="Scharfe M."/>
            <person name="Schoen O."/>
            <person name="Bargues M."/>
            <person name="Terol J."/>
            <person name="Climent J."/>
            <person name="Navarro P."/>
            <person name="Collado C."/>
            <person name="Perez-Perez A."/>
            <person name="Ottenwaelder B."/>
            <person name="Duchemin D."/>
            <person name="Cooke R."/>
            <person name="Laudie M."/>
            <person name="Berger-Llauro C."/>
            <person name="Purnelle B."/>
            <person name="Masuy D."/>
            <person name="de Haan M."/>
            <person name="Maarse A.C."/>
            <person name="Alcaraz J.-P."/>
            <person name="Cottet A."/>
            <person name="Casacuberta E."/>
            <person name="Monfort A."/>
            <person name="Argiriou A."/>
            <person name="Flores M."/>
            <person name="Liguori R."/>
            <person name="Vitale D."/>
            <person name="Mannhaupt G."/>
            <person name="Haase D."/>
            <person name="Schoof H."/>
            <person name="Rudd S."/>
            <person name="Zaccaria P."/>
            <person name="Mewes H.-W."/>
            <person name="Mayer K.F.X."/>
            <person name="Kaul S."/>
            <person name="Town C.D."/>
            <person name="Koo H.L."/>
            <person name="Tallon L.J."/>
            <person name="Jenkins J."/>
            <person name="Rooney T."/>
            <person name="Rizzo M."/>
            <person name="Walts A."/>
            <person name="Utterback T."/>
            <person name="Fujii C.Y."/>
            <person name="Shea T.P."/>
            <person name="Creasy T.H."/>
            <person name="Haas B."/>
            <person name="Maiti R."/>
            <person name="Wu D."/>
            <person name="Peterson J."/>
            <person name="Van Aken S."/>
            <person name="Pai G."/>
            <person name="Militscher J."/>
            <person name="Sellers P."/>
            <person name="Gill J.E."/>
            <person name="Feldblyum T.V."/>
            <person name="Preuss D."/>
            <person name="Lin X."/>
            <person name="Nierman W.C."/>
            <person name="Salzberg S.L."/>
            <person name="White O."/>
            <person name="Venter J.C."/>
            <person name="Fraser C.M."/>
            <person name="Kaneko T."/>
            <person name="Nakamura Y."/>
            <person name="Sato S."/>
            <person name="Kato T."/>
            <person name="Asamizu E."/>
            <person name="Sasamoto S."/>
            <person name="Kimura T."/>
            <person name="Idesawa K."/>
            <person name="Kawashima K."/>
            <person name="Kishida Y."/>
            <person name="Kiyokawa C."/>
            <person name="Kohara M."/>
            <person name="Matsumoto M."/>
            <person name="Matsuno A."/>
            <person name="Muraki A."/>
            <person name="Nakayama S."/>
            <person name="Nakazaki N."/>
            <person name="Shinpo S."/>
            <person name="Takeuchi C."/>
            <person name="Wada T."/>
            <person name="Watanabe A."/>
            <person name="Yamada M."/>
            <person name="Yasuda M."/>
            <person name="Tabata S."/>
        </authorList>
    </citation>
    <scope>NUCLEOTIDE SEQUENCE [LARGE SCALE GENOMIC DNA]</scope>
    <source>
        <strain>cv. Columbia</strain>
    </source>
</reference>
<reference key="2">
    <citation type="journal article" date="2017" name="Plant J.">
        <title>Araport11: a complete reannotation of the Arabidopsis thaliana reference genome.</title>
        <authorList>
            <person name="Cheng C.Y."/>
            <person name="Krishnakumar V."/>
            <person name="Chan A.P."/>
            <person name="Thibaud-Nissen F."/>
            <person name="Schobel S."/>
            <person name="Town C.D."/>
        </authorList>
    </citation>
    <scope>GENOME REANNOTATION</scope>
    <source>
        <strain>cv. Columbia</strain>
    </source>
</reference>
<reference key="3">
    <citation type="journal article" date="2004" name="J. Plant Physiol.">
        <title>Analysis of an Arabidopsis thaliana protein family, structurally related to cytochromes b561 and potentially involved in catecholamine biochemistry in plants.</title>
        <authorList>
            <person name="Verelst W."/>
            <person name="Asard H."/>
        </authorList>
    </citation>
    <scope>DOMAIN</scope>
    <scope>FUNCTION</scope>
</reference>
<reference key="4">
    <citation type="journal article" date="2005" name="Biochim. Biophys. Acta">
        <title>Cytochrome b561 protein family: expanding roles and versatile transmembrane electron transfer abilities as predicted by a new classification system and protein sequence motif analyses.</title>
        <authorList>
            <person name="Tsubaki M."/>
            <person name="Takeuchi F."/>
            <person name="Nakanishi N."/>
        </authorList>
    </citation>
    <scope>GENE FAMILY</scope>
    <scope>NOMENCLATURE</scope>
</reference>
<reference key="5">
    <citation type="journal article" date="2009" name="Plant Physiol.">
        <title>Auxin-responsive genes AIR12 code for a new family of plasma membrane b-type cytochromes specific to flowering plants.</title>
        <authorList>
            <person name="Preger V."/>
            <person name="Tango N."/>
            <person name="Marchand C."/>
            <person name="Lemaire S.D."/>
            <person name="Carbonera D."/>
            <person name="Di Valentin M."/>
            <person name="Costa A."/>
            <person name="Pupillo P."/>
            <person name="Trost P."/>
        </authorList>
    </citation>
    <scope>DOMAIN</scope>
</reference>
<reference key="6">
    <citation type="journal article" date="2013" name="Antioxid. Redox Signal.">
        <title>Cytochromes b561: ascorbate-mediated trans-membrane electron transport.</title>
        <authorList>
            <person name="Asard H."/>
            <person name="Barbaro R."/>
            <person name="Trost P."/>
            <person name="Berczi A."/>
        </authorList>
    </citation>
    <scope>REVIEW</scope>
</reference>
<proteinExistence type="inferred from homology"/>
<feature type="signal peptide" evidence="2">
    <location>
        <begin position="1"/>
        <end position="23"/>
    </location>
</feature>
<feature type="chain" id="PRO_0000430477" description="Cytochrome b561 and DOMON domain-containing protein At3g61750">
    <location>
        <begin position="24"/>
        <end position="398"/>
    </location>
</feature>
<feature type="transmembrane region" description="Helical; Name=1" evidence="2">
    <location>
        <begin position="222"/>
        <end position="242"/>
    </location>
</feature>
<feature type="transmembrane region" description="Helical; Name=2" evidence="2">
    <location>
        <begin position="252"/>
        <end position="272"/>
    </location>
</feature>
<feature type="transmembrane region" description="Helical; Name=3" evidence="2">
    <location>
        <begin position="287"/>
        <end position="307"/>
    </location>
</feature>
<feature type="transmembrane region" description="Helical; Name=4" evidence="2">
    <location>
        <begin position="320"/>
        <end position="340"/>
    </location>
</feature>
<feature type="transmembrane region" description="Helical; Name=5" evidence="2">
    <location>
        <begin position="351"/>
        <end position="371"/>
    </location>
</feature>
<feature type="domain" description="DOMON" evidence="4">
    <location>
        <begin position="64"/>
        <end position="177"/>
    </location>
</feature>
<feature type="domain" description="Cytochrome b561" evidence="3">
    <location>
        <begin position="184"/>
        <end position="377"/>
    </location>
</feature>
<feature type="binding site" description="axial binding residue" evidence="1">
    <location>
        <position position="220"/>
    </location>
    <ligand>
        <name>heme b</name>
        <dbReference type="ChEBI" id="CHEBI:60344"/>
        <label>1</label>
    </ligand>
    <ligandPart>
        <name>Fe</name>
        <dbReference type="ChEBI" id="CHEBI:18248"/>
    </ligandPart>
</feature>
<feature type="binding site" description="axial binding residue" evidence="1">
    <location>
        <position position="253"/>
    </location>
    <ligand>
        <name>heme b</name>
        <dbReference type="ChEBI" id="CHEBI:60344"/>
        <label>2</label>
    </ligand>
    <ligandPart>
        <name>Fe</name>
        <dbReference type="ChEBI" id="CHEBI:18248"/>
    </ligandPart>
</feature>
<feature type="binding site" description="axial binding residue" evidence="1">
    <location>
        <position position="285"/>
    </location>
    <ligand>
        <name>heme b</name>
        <dbReference type="ChEBI" id="CHEBI:60344"/>
        <label>1</label>
    </ligand>
    <ligandPart>
        <name>Fe</name>
        <dbReference type="ChEBI" id="CHEBI:18248"/>
    </ligandPart>
</feature>
<feature type="binding site" description="axial binding residue" evidence="1">
    <location>
        <position position="321"/>
    </location>
    <ligand>
        <name>heme b</name>
        <dbReference type="ChEBI" id="CHEBI:60344"/>
        <label>2</label>
    </ligand>
    <ligandPart>
        <name>Fe</name>
        <dbReference type="ChEBI" id="CHEBI:18248"/>
    </ligandPart>
</feature>
<dbReference type="EMBL" id="AL132959">
    <property type="protein sequence ID" value="CAB71105.1"/>
    <property type="molecule type" value="Genomic_DNA"/>
</dbReference>
<dbReference type="EMBL" id="AL138642">
    <property type="status" value="NOT_ANNOTATED_CDS"/>
    <property type="molecule type" value="Genomic_DNA"/>
</dbReference>
<dbReference type="EMBL" id="CP002686">
    <property type="protein sequence ID" value="AEE80252.1"/>
    <property type="molecule type" value="Genomic_DNA"/>
</dbReference>
<dbReference type="PIR" id="T47967">
    <property type="entry name" value="T47967"/>
</dbReference>
<dbReference type="RefSeq" id="NP_191734.1">
    <property type="nucleotide sequence ID" value="NM_116040.2"/>
</dbReference>
<dbReference type="SMR" id="Q9M363"/>
<dbReference type="BioGRID" id="10662">
    <property type="interactions" value="14"/>
</dbReference>
<dbReference type="IntAct" id="Q9M363">
    <property type="interactions" value="14"/>
</dbReference>
<dbReference type="STRING" id="3702.Q9M363"/>
<dbReference type="iPTMnet" id="Q9M363"/>
<dbReference type="PaxDb" id="3702-AT3G61750.1"/>
<dbReference type="ProteomicsDB" id="241191"/>
<dbReference type="EnsemblPlants" id="AT3G61750.1">
    <property type="protein sequence ID" value="AT3G61750.1"/>
    <property type="gene ID" value="AT3G61750"/>
</dbReference>
<dbReference type="GeneID" id="825348"/>
<dbReference type="Gramene" id="AT3G61750.1">
    <property type="protein sequence ID" value="AT3G61750.1"/>
    <property type="gene ID" value="AT3G61750"/>
</dbReference>
<dbReference type="KEGG" id="ath:AT3G61750"/>
<dbReference type="Araport" id="AT3G61750"/>
<dbReference type="TAIR" id="AT3G61750"/>
<dbReference type="eggNOG" id="KOG4293">
    <property type="taxonomic scope" value="Eukaryota"/>
</dbReference>
<dbReference type="HOGENOM" id="CLU_036675_0_1_1"/>
<dbReference type="InParanoid" id="Q9M363"/>
<dbReference type="OMA" id="VPRYFKH"/>
<dbReference type="PhylomeDB" id="Q9M363"/>
<dbReference type="PRO" id="PR:Q9M363"/>
<dbReference type="Proteomes" id="UP000006548">
    <property type="component" value="Chromosome 3"/>
</dbReference>
<dbReference type="ExpressionAtlas" id="Q9M363">
    <property type="expression patterns" value="baseline and differential"/>
</dbReference>
<dbReference type="GO" id="GO:0016020">
    <property type="term" value="C:membrane"/>
    <property type="evidence" value="ECO:0007669"/>
    <property type="project" value="UniProtKB-SubCell"/>
</dbReference>
<dbReference type="GO" id="GO:0046872">
    <property type="term" value="F:metal ion binding"/>
    <property type="evidence" value="ECO:0007669"/>
    <property type="project" value="UniProtKB-KW"/>
</dbReference>
<dbReference type="CDD" id="cd08760">
    <property type="entry name" value="Cyt_b561_FRRS1_like"/>
    <property type="match status" value="1"/>
</dbReference>
<dbReference type="CDD" id="cd09631">
    <property type="entry name" value="DOMON_DOH"/>
    <property type="match status" value="1"/>
</dbReference>
<dbReference type="Gene3D" id="1.20.120.1770">
    <property type="match status" value="1"/>
</dbReference>
<dbReference type="InterPro" id="IPR006593">
    <property type="entry name" value="Cyt_b561/ferric_Rdtase_TM"/>
</dbReference>
<dbReference type="InterPro" id="IPR045266">
    <property type="entry name" value="DOH_DOMON"/>
</dbReference>
<dbReference type="InterPro" id="IPR005018">
    <property type="entry name" value="DOMON_domain"/>
</dbReference>
<dbReference type="PANTHER" id="PTHR23130">
    <property type="entry name" value="CYTOCHROME B561 AND DOMON DOMAIN-CONTAINING PROTEIN"/>
    <property type="match status" value="1"/>
</dbReference>
<dbReference type="PANTHER" id="PTHR23130:SF115">
    <property type="entry name" value="OS01G0680900 PROTEIN"/>
    <property type="match status" value="1"/>
</dbReference>
<dbReference type="Pfam" id="PF03188">
    <property type="entry name" value="Cytochrom_B561"/>
    <property type="match status" value="1"/>
</dbReference>
<dbReference type="Pfam" id="PF03351">
    <property type="entry name" value="DOMON"/>
    <property type="match status" value="1"/>
</dbReference>
<dbReference type="SMART" id="SM00665">
    <property type="entry name" value="B561"/>
    <property type="match status" value="1"/>
</dbReference>
<dbReference type="SMART" id="SM00664">
    <property type="entry name" value="DoH"/>
    <property type="match status" value="1"/>
</dbReference>
<dbReference type="PROSITE" id="PS50939">
    <property type="entry name" value="CYTOCHROME_B561"/>
    <property type="match status" value="1"/>
</dbReference>
<dbReference type="PROSITE" id="PS50836">
    <property type="entry name" value="DOMON"/>
    <property type="match status" value="1"/>
</dbReference>
<organism>
    <name type="scientific">Arabidopsis thaliana</name>
    <name type="common">Mouse-ear cress</name>
    <dbReference type="NCBI Taxonomy" id="3702"/>
    <lineage>
        <taxon>Eukaryota</taxon>
        <taxon>Viridiplantae</taxon>
        <taxon>Streptophyta</taxon>
        <taxon>Embryophyta</taxon>
        <taxon>Tracheophyta</taxon>
        <taxon>Spermatophyta</taxon>
        <taxon>Magnoliopsida</taxon>
        <taxon>eudicotyledons</taxon>
        <taxon>Gunneridae</taxon>
        <taxon>Pentapetalae</taxon>
        <taxon>rosids</taxon>
        <taxon>malvids</taxon>
        <taxon>Brassicales</taxon>
        <taxon>Brassicaceae</taxon>
        <taxon>Camelineae</taxon>
        <taxon>Arabidopsis</taxon>
    </lineage>
</organism>
<sequence length="398" mass="44466">MKTLVGFYILCFLIGQDLPFLAADDVNVINDSTQNLCFANRLSDFLPPPYSNISDNMPCTPLWNTFVLRYSENRDNVMTIIVSALYTTGWVGIGFSKEGRMVGSSAMIGWISKKGHAKIKQYYLQGTERDQVVPDQGELQLQKVPPVVALHGAMIYLAFQVKFAVRVPRRAVILAFSTAYPSKLGRLTKHDDKTTVIVDFSKASGATSIKTTTSTEKTKHGVMAILGWGFLLPVGAILARYLRHKDPLWYYLHIGFQFTGFIFGLAAVILGIQLYNRIQPDIPAHRGIGIFLLVLSTLQVLAFFARPQKETKMRRYWNWYHHWIGRISLFFGAVNIVLGIRMADNGGDGWKIGYGFVLSVTLLAFVVLEIFRIRGTIGSPSSRSPPSFETHPSSSTSV</sequence>
<accession>Q9M363</accession>
<protein>
    <recommendedName>
        <fullName>Cytochrome b561 and DOMON domain-containing protein At3g61750</fullName>
    </recommendedName>
    <alternativeName>
        <fullName>Protein b561A.tha9</fullName>
    </alternativeName>
</protein>
<evidence type="ECO:0000250" key="1">
    <source>
        <dbReference type="UniProtKB" id="Q9SWS1"/>
    </source>
</evidence>
<evidence type="ECO:0000255" key="2"/>
<evidence type="ECO:0000255" key="3">
    <source>
        <dbReference type="PROSITE-ProRule" id="PRU00242"/>
    </source>
</evidence>
<evidence type="ECO:0000255" key="4">
    <source>
        <dbReference type="PROSITE-ProRule" id="PRU00246"/>
    </source>
</evidence>
<evidence type="ECO:0000269" key="5">
    <source>
    </source>
</evidence>
<evidence type="ECO:0000269" key="6">
    <source>
    </source>
</evidence>
<evidence type="ECO:0000305" key="7"/>
<keyword id="KW-0249">Electron transport</keyword>
<keyword id="KW-0349">Heme</keyword>
<keyword id="KW-0408">Iron</keyword>
<keyword id="KW-0472">Membrane</keyword>
<keyword id="KW-0479">Metal-binding</keyword>
<keyword id="KW-1185">Reference proteome</keyword>
<keyword id="KW-0732">Signal</keyword>
<keyword id="KW-0812">Transmembrane</keyword>
<keyword id="KW-1133">Transmembrane helix</keyword>
<keyword id="KW-0813">Transport</keyword>
<gene>
    <name type="ordered locus">At3g61750</name>
    <name type="ORF">F15G16.140</name>
    <name type="ORF">F21F14.14</name>
</gene>